<comment type="caution">
    <text evidence="1">Could be the product of a pseudogene.</text>
</comment>
<comment type="sequence caution" evidence="1">
    <conflict type="erroneous initiation">
        <sequence resource="EMBL-CDS" id="AAH31236"/>
    </conflict>
    <text>Truncated N-terminus.</text>
</comment>
<proteinExistence type="uncertain"/>
<organism>
    <name type="scientific">Homo sapiens</name>
    <name type="common">Human</name>
    <dbReference type="NCBI Taxonomy" id="9606"/>
    <lineage>
        <taxon>Eukaryota</taxon>
        <taxon>Metazoa</taxon>
        <taxon>Chordata</taxon>
        <taxon>Craniata</taxon>
        <taxon>Vertebrata</taxon>
        <taxon>Euteleostomi</taxon>
        <taxon>Mammalia</taxon>
        <taxon>Eutheria</taxon>
        <taxon>Euarchontoglires</taxon>
        <taxon>Primates</taxon>
        <taxon>Haplorrhini</taxon>
        <taxon>Catarrhini</taxon>
        <taxon>Hominidae</taxon>
        <taxon>Homo</taxon>
    </lineage>
</organism>
<dbReference type="EMBL" id="AL135787">
    <property type="status" value="NOT_ANNOTATED_CDS"/>
    <property type="molecule type" value="Genomic_DNA"/>
</dbReference>
<dbReference type="EMBL" id="BC031236">
    <property type="protein sequence ID" value="AAH31236.1"/>
    <property type="status" value="ALT_INIT"/>
    <property type="molecule type" value="mRNA"/>
</dbReference>
<dbReference type="SMR" id="Q49AS3"/>
<dbReference type="BioMuta" id="HGNC:23369"/>
<dbReference type="MassIVE" id="Q49AS3"/>
<dbReference type="PeptideAtlas" id="Q49AS3"/>
<dbReference type="AGR" id="HGNC:23369"/>
<dbReference type="GeneCards" id="LRRC37A5P"/>
<dbReference type="HGNC" id="HGNC:23369">
    <property type="gene designation" value="LRRC37A5P"/>
</dbReference>
<dbReference type="neXtProt" id="NX_Q49AS3"/>
<dbReference type="InParanoid" id="Q49AS3"/>
<dbReference type="PAN-GO" id="Q49AS3">
    <property type="GO annotations" value="0 GO annotations based on evolutionary models"/>
</dbReference>
<dbReference type="Pharos" id="Q49AS3">
    <property type="development level" value="Tdark"/>
</dbReference>
<dbReference type="Proteomes" id="UP000005640">
    <property type="component" value="Unplaced"/>
</dbReference>
<dbReference type="RNAct" id="Q49AS3">
    <property type="molecule type" value="protein"/>
</dbReference>
<dbReference type="InterPro" id="IPR015753">
    <property type="entry name" value="LRRC37"/>
</dbReference>
<dbReference type="InterPro" id="IPR029423">
    <property type="entry name" value="LRRC37AB_C"/>
</dbReference>
<dbReference type="PANTHER" id="PTHR23045:SF9">
    <property type="entry name" value="LEUCINE RICH REPEAT CONTAINING 37A-RELATED"/>
    <property type="match status" value="1"/>
</dbReference>
<dbReference type="PANTHER" id="PTHR23045">
    <property type="entry name" value="LEUCINE-RICH REPEAT-CONTAINING PROTEIN 37A"/>
    <property type="match status" value="1"/>
</dbReference>
<dbReference type="Pfam" id="PF14914">
    <property type="entry name" value="LRRC37AB_C"/>
    <property type="match status" value="1"/>
</dbReference>
<name>L37A5_HUMAN</name>
<sequence>MNRNILEEMLQYLLIDWIVGDQFEIQLNQQLWSLIPNNDVRRLVSHVIRTLKTDCTETHLQLACAKLISRTGLLMKLLSEQQELRTVSMTAWKPRMNRKSRSRMRS</sequence>
<gene>
    <name type="primary">LRRC37A5P</name>
    <name type="synonym">C9orf29</name>
</gene>
<feature type="chain" id="PRO_0000280394" description="Putative protein LRRC37A5P">
    <location>
        <begin position="1"/>
        <end position="106"/>
    </location>
</feature>
<feature type="sequence conflict" description="In Ref. 2; AAH31236." evidence="1" ref="2">
    <original>D</original>
    <variation>N</variation>
    <location>
        <position position="39"/>
    </location>
</feature>
<feature type="sequence conflict" description="In Ref. 2; AAH31236." evidence="1" ref="2">
    <original>M</original>
    <variation>L</variation>
    <location>
        <position position="96"/>
    </location>
</feature>
<accession>Q49AS3</accession>
<accession>Q5JVP0</accession>
<protein>
    <recommendedName>
        <fullName>Putative protein LRRC37A5P</fullName>
    </recommendedName>
    <alternativeName>
        <fullName>Leucine-rich repeat-containing 37 member A5 pseudogene</fullName>
    </alternativeName>
</protein>
<keyword id="KW-1185">Reference proteome</keyword>
<reference key="1">
    <citation type="journal article" date="2004" name="Nature">
        <title>DNA sequence and analysis of human chromosome 9.</title>
        <authorList>
            <person name="Humphray S.J."/>
            <person name="Oliver K."/>
            <person name="Hunt A.R."/>
            <person name="Plumb R.W."/>
            <person name="Loveland J.E."/>
            <person name="Howe K.L."/>
            <person name="Andrews T.D."/>
            <person name="Searle S."/>
            <person name="Hunt S.E."/>
            <person name="Scott C.E."/>
            <person name="Jones M.C."/>
            <person name="Ainscough R."/>
            <person name="Almeida J.P."/>
            <person name="Ambrose K.D."/>
            <person name="Ashwell R.I.S."/>
            <person name="Babbage A.K."/>
            <person name="Babbage S."/>
            <person name="Bagguley C.L."/>
            <person name="Bailey J."/>
            <person name="Banerjee R."/>
            <person name="Barker D.J."/>
            <person name="Barlow K.F."/>
            <person name="Bates K."/>
            <person name="Beasley H."/>
            <person name="Beasley O."/>
            <person name="Bird C.P."/>
            <person name="Bray-Allen S."/>
            <person name="Brown A.J."/>
            <person name="Brown J.Y."/>
            <person name="Burford D."/>
            <person name="Burrill W."/>
            <person name="Burton J."/>
            <person name="Carder C."/>
            <person name="Carter N.P."/>
            <person name="Chapman J.C."/>
            <person name="Chen Y."/>
            <person name="Clarke G."/>
            <person name="Clark S.Y."/>
            <person name="Clee C.M."/>
            <person name="Clegg S."/>
            <person name="Collier R.E."/>
            <person name="Corby N."/>
            <person name="Crosier M."/>
            <person name="Cummings A.T."/>
            <person name="Davies J."/>
            <person name="Dhami P."/>
            <person name="Dunn M."/>
            <person name="Dutta I."/>
            <person name="Dyer L.W."/>
            <person name="Earthrowl M.E."/>
            <person name="Faulkner L."/>
            <person name="Fleming C.J."/>
            <person name="Frankish A."/>
            <person name="Frankland J.A."/>
            <person name="French L."/>
            <person name="Fricker D.G."/>
            <person name="Garner P."/>
            <person name="Garnett J."/>
            <person name="Ghori J."/>
            <person name="Gilbert J.G.R."/>
            <person name="Glison C."/>
            <person name="Grafham D.V."/>
            <person name="Gribble S."/>
            <person name="Griffiths C."/>
            <person name="Griffiths-Jones S."/>
            <person name="Grocock R."/>
            <person name="Guy J."/>
            <person name="Hall R.E."/>
            <person name="Hammond S."/>
            <person name="Harley J.L."/>
            <person name="Harrison E.S.I."/>
            <person name="Hart E.A."/>
            <person name="Heath P.D."/>
            <person name="Henderson C.D."/>
            <person name="Hopkins B.L."/>
            <person name="Howard P.J."/>
            <person name="Howden P.J."/>
            <person name="Huckle E."/>
            <person name="Johnson C."/>
            <person name="Johnson D."/>
            <person name="Joy A.A."/>
            <person name="Kay M."/>
            <person name="Keenan S."/>
            <person name="Kershaw J.K."/>
            <person name="Kimberley A.M."/>
            <person name="King A."/>
            <person name="Knights A."/>
            <person name="Laird G.K."/>
            <person name="Langford C."/>
            <person name="Lawlor S."/>
            <person name="Leongamornlert D.A."/>
            <person name="Leversha M."/>
            <person name="Lloyd C."/>
            <person name="Lloyd D.M."/>
            <person name="Lovell J."/>
            <person name="Martin S."/>
            <person name="Mashreghi-Mohammadi M."/>
            <person name="Matthews L."/>
            <person name="McLaren S."/>
            <person name="McLay K.E."/>
            <person name="McMurray A."/>
            <person name="Milne S."/>
            <person name="Nickerson T."/>
            <person name="Nisbett J."/>
            <person name="Nordsiek G."/>
            <person name="Pearce A.V."/>
            <person name="Peck A.I."/>
            <person name="Porter K.M."/>
            <person name="Pandian R."/>
            <person name="Pelan S."/>
            <person name="Phillimore B."/>
            <person name="Povey S."/>
            <person name="Ramsey Y."/>
            <person name="Rand V."/>
            <person name="Scharfe M."/>
            <person name="Sehra H.K."/>
            <person name="Shownkeen R."/>
            <person name="Sims S.K."/>
            <person name="Skuce C.D."/>
            <person name="Smith M."/>
            <person name="Steward C.A."/>
            <person name="Swarbreck D."/>
            <person name="Sycamore N."/>
            <person name="Tester J."/>
            <person name="Thorpe A."/>
            <person name="Tracey A."/>
            <person name="Tromans A."/>
            <person name="Thomas D.W."/>
            <person name="Wall M."/>
            <person name="Wallis J.M."/>
            <person name="West A.P."/>
            <person name="Whitehead S.L."/>
            <person name="Willey D.L."/>
            <person name="Williams S.A."/>
            <person name="Wilming L."/>
            <person name="Wray P.W."/>
            <person name="Young L."/>
            <person name="Ashurst J.L."/>
            <person name="Coulson A."/>
            <person name="Blocker H."/>
            <person name="Durbin R.M."/>
            <person name="Sulston J.E."/>
            <person name="Hubbard T."/>
            <person name="Jackson M.J."/>
            <person name="Bentley D.R."/>
            <person name="Beck S."/>
            <person name="Rogers J."/>
            <person name="Dunham I."/>
        </authorList>
    </citation>
    <scope>NUCLEOTIDE SEQUENCE [LARGE SCALE GENOMIC DNA]</scope>
</reference>
<reference key="2">
    <citation type="journal article" date="2004" name="Genome Res.">
        <title>The status, quality, and expansion of the NIH full-length cDNA project: the Mammalian Gene Collection (MGC).</title>
        <authorList>
            <consortium name="The MGC Project Team"/>
        </authorList>
    </citation>
    <scope>NUCLEOTIDE SEQUENCE [LARGE SCALE MRNA]</scope>
    <source>
        <tissue>Testis</tissue>
    </source>
</reference>
<evidence type="ECO:0000305" key="1"/>